<keyword id="KW-0066">ATP synthesis</keyword>
<keyword id="KW-0997">Cell inner membrane</keyword>
<keyword id="KW-1003">Cell membrane</keyword>
<keyword id="KW-0139">CF(1)</keyword>
<keyword id="KW-0375">Hydrogen ion transport</keyword>
<keyword id="KW-0406">Ion transport</keyword>
<keyword id="KW-0472">Membrane</keyword>
<keyword id="KW-0813">Transport</keyword>
<sequence length="140" mass="15237">MAAITFHLDVVSAEKKIFSGRVETFQVTGSEGELGIFHGHTPLLTAIKPGMVRIVKLHGEEEFIYVSGGIVEVQPGTATVLADTAIRGEELDAAKAEEAKRRAKENILNQHGDMDFAQAASELAKAIAQLRVIELTKKRR</sequence>
<organism>
    <name type="scientific">Vibrio vulnificus (strain YJ016)</name>
    <dbReference type="NCBI Taxonomy" id="196600"/>
    <lineage>
        <taxon>Bacteria</taxon>
        <taxon>Pseudomonadati</taxon>
        <taxon>Pseudomonadota</taxon>
        <taxon>Gammaproteobacteria</taxon>
        <taxon>Vibrionales</taxon>
        <taxon>Vibrionaceae</taxon>
        <taxon>Vibrio</taxon>
    </lineage>
</organism>
<evidence type="ECO:0000255" key="1">
    <source>
        <dbReference type="HAMAP-Rule" id="MF_00530"/>
    </source>
</evidence>
<protein>
    <recommendedName>
        <fullName evidence="1">ATP synthase epsilon chain</fullName>
    </recommendedName>
    <alternativeName>
        <fullName evidence="1">ATP synthase F1 sector epsilon subunit</fullName>
    </alternativeName>
    <alternativeName>
        <fullName evidence="1">F-ATPase epsilon subunit</fullName>
    </alternativeName>
</protein>
<comment type="function">
    <text evidence="1">Produces ATP from ADP in the presence of a proton gradient across the membrane.</text>
</comment>
<comment type="subunit">
    <text>F-type ATPases have 2 components, CF(1) - the catalytic core - and CF(0) - the membrane proton channel. CF(1) has five subunits: alpha(3), beta(3), gamma(1), delta(1), epsilon(1). CF(0) has three main subunits: a, b and c.</text>
</comment>
<comment type="subcellular location">
    <subcellularLocation>
        <location evidence="1">Cell inner membrane</location>
        <topology evidence="1">Peripheral membrane protein</topology>
    </subcellularLocation>
</comment>
<comment type="similarity">
    <text evidence="1">Belongs to the ATPase epsilon chain family.</text>
</comment>
<accession>Q7MGI1</accession>
<proteinExistence type="inferred from homology"/>
<dbReference type="EMBL" id="BA000037">
    <property type="protein sequence ID" value="BAC96014.1"/>
    <property type="molecule type" value="Genomic_DNA"/>
</dbReference>
<dbReference type="RefSeq" id="WP_011079056.1">
    <property type="nucleotide sequence ID" value="NC_005139.1"/>
</dbReference>
<dbReference type="SMR" id="Q7MGI1"/>
<dbReference type="STRING" id="672.VV93_v1c29720"/>
<dbReference type="KEGG" id="vvy:VV3250"/>
<dbReference type="eggNOG" id="COG0355">
    <property type="taxonomic scope" value="Bacteria"/>
</dbReference>
<dbReference type="HOGENOM" id="CLU_084338_2_0_6"/>
<dbReference type="Proteomes" id="UP000002675">
    <property type="component" value="Chromosome I"/>
</dbReference>
<dbReference type="GO" id="GO:0005886">
    <property type="term" value="C:plasma membrane"/>
    <property type="evidence" value="ECO:0007669"/>
    <property type="project" value="UniProtKB-SubCell"/>
</dbReference>
<dbReference type="GO" id="GO:0045259">
    <property type="term" value="C:proton-transporting ATP synthase complex"/>
    <property type="evidence" value="ECO:0007669"/>
    <property type="project" value="UniProtKB-KW"/>
</dbReference>
<dbReference type="GO" id="GO:0005524">
    <property type="term" value="F:ATP binding"/>
    <property type="evidence" value="ECO:0007669"/>
    <property type="project" value="UniProtKB-UniRule"/>
</dbReference>
<dbReference type="GO" id="GO:0046933">
    <property type="term" value="F:proton-transporting ATP synthase activity, rotational mechanism"/>
    <property type="evidence" value="ECO:0007669"/>
    <property type="project" value="UniProtKB-UniRule"/>
</dbReference>
<dbReference type="CDD" id="cd12152">
    <property type="entry name" value="F1-ATPase_delta"/>
    <property type="match status" value="1"/>
</dbReference>
<dbReference type="FunFam" id="1.20.5.440:FF:000001">
    <property type="entry name" value="ATP synthase epsilon chain"/>
    <property type="match status" value="1"/>
</dbReference>
<dbReference type="FunFam" id="2.60.15.10:FF:000001">
    <property type="entry name" value="ATP synthase epsilon chain"/>
    <property type="match status" value="1"/>
</dbReference>
<dbReference type="Gene3D" id="1.20.5.440">
    <property type="entry name" value="ATP synthase delta/epsilon subunit, C-terminal domain"/>
    <property type="match status" value="1"/>
</dbReference>
<dbReference type="Gene3D" id="2.60.15.10">
    <property type="entry name" value="F0F1 ATP synthase delta/epsilon subunit, N-terminal"/>
    <property type="match status" value="1"/>
</dbReference>
<dbReference type="HAMAP" id="MF_00530">
    <property type="entry name" value="ATP_synth_epsil_bac"/>
    <property type="match status" value="1"/>
</dbReference>
<dbReference type="InterPro" id="IPR036794">
    <property type="entry name" value="ATP_F1_dsu/esu_C_sf"/>
</dbReference>
<dbReference type="InterPro" id="IPR001469">
    <property type="entry name" value="ATP_synth_F1_dsu/esu"/>
</dbReference>
<dbReference type="InterPro" id="IPR020546">
    <property type="entry name" value="ATP_synth_F1_dsu/esu_N"/>
</dbReference>
<dbReference type="InterPro" id="IPR020547">
    <property type="entry name" value="ATP_synth_F1_esu_C"/>
</dbReference>
<dbReference type="InterPro" id="IPR036771">
    <property type="entry name" value="ATPsynth_dsu/esu_N"/>
</dbReference>
<dbReference type="NCBIfam" id="TIGR01216">
    <property type="entry name" value="ATP_synt_epsi"/>
    <property type="match status" value="1"/>
</dbReference>
<dbReference type="NCBIfam" id="NF001847">
    <property type="entry name" value="PRK00571.1-4"/>
    <property type="match status" value="1"/>
</dbReference>
<dbReference type="PANTHER" id="PTHR13822">
    <property type="entry name" value="ATP SYNTHASE DELTA/EPSILON CHAIN"/>
    <property type="match status" value="1"/>
</dbReference>
<dbReference type="PANTHER" id="PTHR13822:SF10">
    <property type="entry name" value="ATP SYNTHASE EPSILON CHAIN, CHLOROPLASTIC"/>
    <property type="match status" value="1"/>
</dbReference>
<dbReference type="Pfam" id="PF00401">
    <property type="entry name" value="ATP-synt_DE"/>
    <property type="match status" value="1"/>
</dbReference>
<dbReference type="Pfam" id="PF02823">
    <property type="entry name" value="ATP-synt_DE_N"/>
    <property type="match status" value="1"/>
</dbReference>
<dbReference type="SUPFAM" id="SSF46604">
    <property type="entry name" value="Epsilon subunit of F1F0-ATP synthase C-terminal domain"/>
    <property type="match status" value="1"/>
</dbReference>
<dbReference type="SUPFAM" id="SSF51344">
    <property type="entry name" value="Epsilon subunit of F1F0-ATP synthase N-terminal domain"/>
    <property type="match status" value="1"/>
</dbReference>
<reference key="1">
    <citation type="journal article" date="2003" name="Genome Res.">
        <title>Comparative genome analysis of Vibrio vulnificus, a marine pathogen.</title>
        <authorList>
            <person name="Chen C.-Y."/>
            <person name="Wu K.-M."/>
            <person name="Chang Y.-C."/>
            <person name="Chang C.-H."/>
            <person name="Tsai H.-C."/>
            <person name="Liao T.-L."/>
            <person name="Liu Y.-M."/>
            <person name="Chen H.-J."/>
            <person name="Shen A.B.-T."/>
            <person name="Li J.-C."/>
            <person name="Su T.-L."/>
            <person name="Shao C.-P."/>
            <person name="Lee C.-T."/>
            <person name="Hor L.-I."/>
            <person name="Tsai S.-F."/>
        </authorList>
    </citation>
    <scope>NUCLEOTIDE SEQUENCE [LARGE SCALE GENOMIC DNA]</scope>
    <source>
        <strain>YJ016</strain>
    </source>
</reference>
<gene>
    <name evidence="1" type="primary">atpC</name>
    <name type="ordered locus">VV3250</name>
</gene>
<feature type="chain" id="PRO_0000188239" description="ATP synthase epsilon chain">
    <location>
        <begin position="1"/>
        <end position="140"/>
    </location>
</feature>
<name>ATPE_VIBVY</name>